<protein>
    <recommendedName>
        <fullName>Insulinoma-associated protein 1</fullName>
    </recommendedName>
    <alternativeName>
        <fullName>Zinc finger protein IA-1</fullName>
    </alternativeName>
</protein>
<sequence>MPRGFLVKRSKKSTPVSYRVRGGEDGDRALLLSPSCGGARAEPPAPSPVPGPLPPPPPAERAHAALAAALACAPGPQPPPQGPRAAHFGNPEAAHPAPLYSPTRPVSREHEKHKYFERSFNLGSPVSAESFPTPAALLGGGGGGGASGAGGGGTCGGDPLLFAPAELKMGTAFSAGAEAARGPGPGPPLPPAAALRPPGKRPPPPTAAEPPAKAVKAPGAKKPKAIRKLHFEDEVTTSPVLGLKIKEGPVEAPRGRAGGAARPLGEFICQLCKEEYADPFALAQHKCSRIVRVEYRCPECAKVFSCPANLASHRRWHKPRPAPAAARAPEPEAAARAEAREAPGGGSDRDTPSPGGVSESGSEDGLYECHHCAKKFRRQAYLRKHLLAHHQALQAKGAPLAPPAEDLLALYPGPDEKAPQEAAGDGEGAGVLGLSASAECHLCPVCGESFASKGAQERHLRLLHAAQVFPCKYCPATFYSSPGLTRHINKCHPSENRQVILLQVPVRPAC</sequence>
<feature type="chain" id="PRO_0000047268" description="Insulinoma-associated protein 1">
    <location>
        <begin position="1"/>
        <end position="510"/>
    </location>
</feature>
<feature type="zinc finger region" description="C2H2-type 1; atypical" evidence="2">
    <location>
        <begin position="267"/>
        <end position="287"/>
    </location>
</feature>
<feature type="zinc finger region" description="C2H2-type 2" evidence="2">
    <location>
        <begin position="295"/>
        <end position="317"/>
    </location>
</feature>
<feature type="zinc finger region" description="C2H2-type 3" evidence="2">
    <location>
        <begin position="367"/>
        <end position="389"/>
    </location>
</feature>
<feature type="zinc finger region" description="C2H2-type 4" evidence="2">
    <location>
        <begin position="441"/>
        <end position="464"/>
    </location>
</feature>
<feature type="zinc finger region" description="C2H2-type 5" evidence="2">
    <location>
        <begin position="469"/>
        <end position="492"/>
    </location>
</feature>
<feature type="region of interest" description="Disordered" evidence="3">
    <location>
        <begin position="1"/>
        <end position="110"/>
    </location>
</feature>
<feature type="region of interest" description="SNAG domain" evidence="1">
    <location>
        <begin position="1"/>
        <end position="20"/>
    </location>
</feature>
<feature type="region of interest" description="Required and sufficient for interaction with KDM1A" evidence="11">
    <location>
        <begin position="2"/>
        <end position="7"/>
    </location>
</feature>
<feature type="region of interest" description="Necessary for interaction with CCND1">
    <location>
        <begin position="43"/>
        <end position="58"/>
    </location>
</feature>
<feature type="region of interest" description="Disordered" evidence="3">
    <location>
        <begin position="176"/>
        <end position="226"/>
    </location>
</feature>
<feature type="region of interest" description="Disordered" evidence="3">
    <location>
        <begin position="315"/>
        <end position="362"/>
    </location>
</feature>
<feature type="compositionally biased region" description="Basic residues" evidence="3">
    <location>
        <begin position="1"/>
        <end position="12"/>
    </location>
</feature>
<feature type="compositionally biased region" description="Pro residues" evidence="3">
    <location>
        <begin position="43"/>
        <end position="59"/>
    </location>
</feature>
<feature type="compositionally biased region" description="Low complexity" evidence="3">
    <location>
        <begin position="64"/>
        <end position="74"/>
    </location>
</feature>
<feature type="compositionally biased region" description="Low complexity" evidence="3">
    <location>
        <begin position="209"/>
        <end position="218"/>
    </location>
</feature>
<feature type="compositionally biased region" description="Basic and acidic residues" evidence="3">
    <location>
        <begin position="329"/>
        <end position="351"/>
    </location>
</feature>
<feature type="mutagenesis site" description="Inhibits weakly translational repression activity. Inhibits interaction with CCND1 and cell cycle arrest." evidence="10">
    <original>PPAPSPVPGPLPPPPP</original>
    <variation>LLALSLVLGLLLLLLL</variation>
    <location>
        <begin position="43"/>
        <end position="58"/>
    </location>
</feature>
<feature type="helix" evidence="15">
    <location>
        <begin position="3"/>
        <end position="5"/>
    </location>
</feature>
<feature type="strand" evidence="14">
    <location>
        <begin position="449"/>
        <end position="452"/>
    </location>
</feature>
<feature type="helix" evidence="14">
    <location>
        <begin position="453"/>
        <end position="461"/>
    </location>
</feature>
<feature type="strand" evidence="14">
    <location>
        <begin position="466"/>
        <end position="470"/>
    </location>
</feature>
<feature type="strand" evidence="14">
    <location>
        <begin position="477"/>
        <end position="480"/>
    </location>
</feature>
<feature type="helix" evidence="14">
    <location>
        <begin position="481"/>
        <end position="489"/>
    </location>
</feature>
<proteinExistence type="evidence at protein level"/>
<keyword id="KW-0002">3D-structure</keyword>
<keyword id="KW-0131">Cell cycle</keyword>
<keyword id="KW-0217">Developmental protein</keyword>
<keyword id="KW-0221">Differentiation</keyword>
<keyword id="KW-0238">DNA-binding</keyword>
<keyword id="KW-0479">Metal-binding</keyword>
<keyword id="KW-0524">Neurogenesis</keyword>
<keyword id="KW-0539">Nucleus</keyword>
<keyword id="KW-1267">Proteomics identification</keyword>
<keyword id="KW-1185">Reference proteome</keyword>
<keyword id="KW-0677">Repeat</keyword>
<keyword id="KW-0678">Repressor</keyword>
<keyword id="KW-0804">Transcription</keyword>
<keyword id="KW-0805">Transcription regulation</keyword>
<keyword id="KW-0862">Zinc</keyword>
<keyword id="KW-0863">Zinc-finger</keyword>
<accession>Q01101</accession>
<name>INSM1_HUMAN</name>
<gene>
    <name type="primary">INSM1</name>
    <name type="synonym">IA1</name>
</gene>
<dbReference type="EMBL" id="M93119">
    <property type="protein sequence ID" value="AAA58680.1"/>
    <property type="molecule type" value="mRNA"/>
</dbReference>
<dbReference type="EMBL" id="AL161658">
    <property type="status" value="NOT_ANNOTATED_CDS"/>
    <property type="molecule type" value="Genomic_DNA"/>
</dbReference>
<dbReference type="EMBL" id="U07172">
    <property type="protein sequence ID" value="AAA20938.1"/>
    <property type="molecule type" value="Genomic_DNA"/>
</dbReference>
<dbReference type="CCDS" id="CCDS13143.1"/>
<dbReference type="PIR" id="A42750">
    <property type="entry name" value="A42750"/>
</dbReference>
<dbReference type="RefSeq" id="NP_002187.1">
    <property type="nucleotide sequence ID" value="NM_002196.3"/>
</dbReference>
<dbReference type="PDB" id="2LV2">
    <property type="method" value="NMR"/>
    <property type="chains" value="A=424-497"/>
</dbReference>
<dbReference type="PDB" id="3ZMS">
    <property type="method" value="X-ray"/>
    <property type="resolution" value="2.96 A"/>
    <property type="chains" value="C=2-9"/>
</dbReference>
<dbReference type="PDB" id="8JPY">
    <property type="method" value="NMR"/>
    <property type="chains" value="A=257-320"/>
</dbReference>
<dbReference type="PDB" id="8JQ1">
    <property type="method" value="NMR"/>
    <property type="chains" value="A=257-320"/>
</dbReference>
<dbReference type="PDB" id="8K81">
    <property type="method" value="NMR"/>
    <property type="chains" value="A=346-396"/>
</dbReference>
<dbReference type="PDBsum" id="2LV2"/>
<dbReference type="PDBsum" id="3ZMS"/>
<dbReference type="PDBsum" id="8JPY"/>
<dbReference type="PDBsum" id="8JQ1"/>
<dbReference type="PDBsum" id="8K81"/>
<dbReference type="BMRB" id="Q01101"/>
<dbReference type="SMR" id="Q01101"/>
<dbReference type="BioGRID" id="109853">
    <property type="interactions" value="8"/>
</dbReference>
<dbReference type="FunCoup" id="Q01101">
    <property type="interactions" value="460"/>
</dbReference>
<dbReference type="IntAct" id="Q01101">
    <property type="interactions" value="5"/>
</dbReference>
<dbReference type="STRING" id="9606.ENSP00000312631"/>
<dbReference type="GlyGen" id="Q01101">
    <property type="glycosylation" value="2 sites"/>
</dbReference>
<dbReference type="iPTMnet" id="Q01101"/>
<dbReference type="PhosphoSitePlus" id="Q01101"/>
<dbReference type="BioMuta" id="INSM1"/>
<dbReference type="DMDM" id="547700"/>
<dbReference type="jPOST" id="Q01101"/>
<dbReference type="MassIVE" id="Q01101"/>
<dbReference type="PaxDb" id="9606-ENSP00000312631"/>
<dbReference type="PeptideAtlas" id="Q01101"/>
<dbReference type="ProteomicsDB" id="57916"/>
<dbReference type="Antibodypedia" id="9637">
    <property type="antibodies" value="124 antibodies from 28 providers"/>
</dbReference>
<dbReference type="DNASU" id="3642"/>
<dbReference type="Ensembl" id="ENST00000310227.3">
    <property type="protein sequence ID" value="ENSP00000312631.1"/>
    <property type="gene ID" value="ENSG00000173404.5"/>
</dbReference>
<dbReference type="GeneID" id="3642"/>
<dbReference type="KEGG" id="hsa:3642"/>
<dbReference type="MANE-Select" id="ENST00000310227.3">
    <property type="protein sequence ID" value="ENSP00000312631.1"/>
    <property type="RefSeq nucleotide sequence ID" value="NM_002196.3"/>
    <property type="RefSeq protein sequence ID" value="NP_002187.1"/>
</dbReference>
<dbReference type="UCSC" id="uc002wrx.4">
    <property type="organism name" value="human"/>
</dbReference>
<dbReference type="AGR" id="HGNC:6090"/>
<dbReference type="CTD" id="3642"/>
<dbReference type="DisGeNET" id="3642"/>
<dbReference type="GeneCards" id="INSM1"/>
<dbReference type="HGNC" id="HGNC:6090">
    <property type="gene designation" value="INSM1"/>
</dbReference>
<dbReference type="HPA" id="ENSG00000173404">
    <property type="expression patterns" value="Tissue enhanced (brain, pituitary gland)"/>
</dbReference>
<dbReference type="MIM" id="600010">
    <property type="type" value="gene"/>
</dbReference>
<dbReference type="neXtProt" id="NX_Q01101"/>
<dbReference type="OpenTargets" id="ENSG00000173404"/>
<dbReference type="PharmGKB" id="PA29897"/>
<dbReference type="VEuPathDB" id="HostDB:ENSG00000173404"/>
<dbReference type="eggNOG" id="KOG3993">
    <property type="taxonomic scope" value="Eukaryota"/>
</dbReference>
<dbReference type="GeneTree" id="ENSGT00940000162552"/>
<dbReference type="HOGENOM" id="CLU_033476_1_0_1"/>
<dbReference type="InParanoid" id="Q01101"/>
<dbReference type="OMA" id="REHEKHK"/>
<dbReference type="OrthoDB" id="8953942at2759"/>
<dbReference type="PAN-GO" id="Q01101">
    <property type="GO annotations" value="7 GO annotations based on evolutionary models"/>
</dbReference>
<dbReference type="PhylomeDB" id="Q01101"/>
<dbReference type="TreeFam" id="TF320538"/>
<dbReference type="PathwayCommons" id="Q01101"/>
<dbReference type="Reactome" id="R-HSA-210746">
    <property type="pathway name" value="Regulation of gene expression in endocrine-committed (NEUROG3+) progenitor cells"/>
</dbReference>
<dbReference type="SignaLink" id="Q01101"/>
<dbReference type="SIGNOR" id="Q01101"/>
<dbReference type="BioGRID-ORCS" id="3642">
    <property type="hits" value="12 hits in 1168 CRISPR screens"/>
</dbReference>
<dbReference type="EvolutionaryTrace" id="Q01101"/>
<dbReference type="GeneWiki" id="INSM1"/>
<dbReference type="GenomeRNAi" id="3642"/>
<dbReference type="Pharos" id="Q01101">
    <property type="development level" value="Tbio"/>
</dbReference>
<dbReference type="PRO" id="PR:Q01101"/>
<dbReference type="Proteomes" id="UP000005640">
    <property type="component" value="Chromosome 20"/>
</dbReference>
<dbReference type="RNAct" id="Q01101">
    <property type="molecule type" value="protein"/>
</dbReference>
<dbReference type="Bgee" id="ENSG00000173404">
    <property type="expression patterns" value="Expressed in type B pancreatic cell and 80 other cell types or tissues"/>
</dbReference>
<dbReference type="GO" id="GO:0005654">
    <property type="term" value="C:nucleoplasm"/>
    <property type="evidence" value="ECO:0000304"/>
    <property type="project" value="Reactome"/>
</dbReference>
<dbReference type="GO" id="GO:0005634">
    <property type="term" value="C:nucleus"/>
    <property type="evidence" value="ECO:0000250"/>
    <property type="project" value="UniProtKB"/>
</dbReference>
<dbReference type="GO" id="GO:0017053">
    <property type="term" value="C:transcription repressor complex"/>
    <property type="evidence" value="ECO:0000314"/>
    <property type="project" value="UniProtKB"/>
</dbReference>
<dbReference type="GO" id="GO:0031490">
    <property type="term" value="F:chromatin DNA binding"/>
    <property type="evidence" value="ECO:0000314"/>
    <property type="project" value="UniProtKB"/>
</dbReference>
<dbReference type="GO" id="GO:0030332">
    <property type="term" value="F:cyclin binding"/>
    <property type="evidence" value="ECO:0000353"/>
    <property type="project" value="UniProtKB"/>
</dbReference>
<dbReference type="GO" id="GO:0003700">
    <property type="term" value="F:DNA-binding transcription factor activity"/>
    <property type="evidence" value="ECO:0000314"/>
    <property type="project" value="UniProtKB"/>
</dbReference>
<dbReference type="GO" id="GO:0001227">
    <property type="term" value="F:DNA-binding transcription repressor activity, RNA polymerase II-specific"/>
    <property type="evidence" value="ECO:0000314"/>
    <property type="project" value="NTNU_SB"/>
</dbReference>
<dbReference type="GO" id="GO:0042826">
    <property type="term" value="F:histone deacetylase binding"/>
    <property type="evidence" value="ECO:0000353"/>
    <property type="project" value="UniProtKB"/>
</dbReference>
<dbReference type="GO" id="GO:0060090">
    <property type="term" value="F:molecular adaptor activity"/>
    <property type="evidence" value="ECO:0000269"/>
    <property type="project" value="DisProt"/>
</dbReference>
<dbReference type="GO" id="GO:0000978">
    <property type="term" value="F:RNA polymerase II cis-regulatory region sequence-specific DNA binding"/>
    <property type="evidence" value="ECO:0000314"/>
    <property type="project" value="UniProtKB"/>
</dbReference>
<dbReference type="GO" id="GO:0008270">
    <property type="term" value="F:zinc ion binding"/>
    <property type="evidence" value="ECO:0007669"/>
    <property type="project" value="UniProtKB-KW"/>
</dbReference>
<dbReference type="GO" id="GO:0061104">
    <property type="term" value="P:adrenal chromaffin cell differentiation"/>
    <property type="evidence" value="ECO:0000250"/>
    <property type="project" value="UniProtKB"/>
</dbReference>
<dbReference type="GO" id="GO:0016477">
    <property type="term" value="P:cell migration"/>
    <property type="evidence" value="ECO:0007669"/>
    <property type="project" value="Ensembl"/>
</dbReference>
<dbReference type="GO" id="GO:0008283">
    <property type="term" value="P:cell population proliferation"/>
    <property type="evidence" value="ECO:0007669"/>
    <property type="project" value="Ensembl"/>
</dbReference>
<dbReference type="GO" id="GO:0008285">
    <property type="term" value="P:negative regulation of cell population proliferation"/>
    <property type="evidence" value="ECO:0000314"/>
    <property type="project" value="UniProtKB"/>
</dbReference>
<dbReference type="GO" id="GO:0001933">
    <property type="term" value="P:negative regulation of protein phosphorylation"/>
    <property type="evidence" value="ECO:0000314"/>
    <property type="project" value="UniProtKB"/>
</dbReference>
<dbReference type="GO" id="GO:0000122">
    <property type="term" value="P:negative regulation of transcription by RNA polymerase II"/>
    <property type="evidence" value="ECO:0000314"/>
    <property type="project" value="UniProtKB"/>
</dbReference>
<dbReference type="GO" id="GO:0030182">
    <property type="term" value="P:neuron differentiation"/>
    <property type="evidence" value="ECO:0000318"/>
    <property type="project" value="GO_Central"/>
</dbReference>
<dbReference type="GO" id="GO:0003358">
    <property type="term" value="P:noradrenergic neuron development"/>
    <property type="evidence" value="ECO:0000250"/>
    <property type="project" value="UniProtKB"/>
</dbReference>
<dbReference type="GO" id="GO:0042421">
    <property type="term" value="P:norepinephrine biosynthetic process"/>
    <property type="evidence" value="ECO:0000250"/>
    <property type="project" value="UniProtKB"/>
</dbReference>
<dbReference type="GO" id="GO:0003310">
    <property type="term" value="P:pancreatic A cell differentiation"/>
    <property type="evidence" value="ECO:0000250"/>
    <property type="project" value="UniProtKB"/>
</dbReference>
<dbReference type="GO" id="GO:0045597">
    <property type="term" value="P:positive regulation of cell differentiation"/>
    <property type="evidence" value="ECO:0000250"/>
    <property type="project" value="UniProtKB"/>
</dbReference>
<dbReference type="GO" id="GO:0030335">
    <property type="term" value="P:positive regulation of cell migration"/>
    <property type="evidence" value="ECO:0007669"/>
    <property type="project" value="Ensembl"/>
</dbReference>
<dbReference type="GO" id="GO:2000179">
    <property type="term" value="P:positive regulation of neural precursor cell proliferation"/>
    <property type="evidence" value="ECO:0000250"/>
    <property type="project" value="UniProtKB"/>
</dbReference>
<dbReference type="GO" id="GO:0051726">
    <property type="term" value="P:regulation of cell cycle"/>
    <property type="evidence" value="ECO:0000314"/>
    <property type="project" value="UniProtKB"/>
</dbReference>
<dbReference type="GO" id="GO:0010564">
    <property type="term" value="P:regulation of cell cycle process"/>
    <property type="evidence" value="ECO:0000318"/>
    <property type="project" value="GO_Central"/>
</dbReference>
<dbReference type="GO" id="GO:0010468">
    <property type="term" value="P:regulation of gene expression"/>
    <property type="evidence" value="ECO:0000250"/>
    <property type="project" value="UniProtKB"/>
</dbReference>
<dbReference type="GO" id="GO:0043254">
    <property type="term" value="P:regulation of protein-containing complex assembly"/>
    <property type="evidence" value="ECO:0000314"/>
    <property type="project" value="UniProtKB"/>
</dbReference>
<dbReference type="GO" id="GO:0061549">
    <property type="term" value="P:sympathetic ganglion development"/>
    <property type="evidence" value="ECO:0000250"/>
    <property type="project" value="UniProtKB"/>
</dbReference>
<dbReference type="GO" id="GO:0060290">
    <property type="term" value="P:transdifferentiation"/>
    <property type="evidence" value="ECO:0000314"/>
    <property type="project" value="UniProtKB"/>
</dbReference>
<dbReference type="GO" id="GO:0003323">
    <property type="term" value="P:type B pancreatic cell development"/>
    <property type="evidence" value="ECO:0007669"/>
    <property type="project" value="Ensembl"/>
</dbReference>
<dbReference type="GO" id="GO:0003309">
    <property type="term" value="P:type B pancreatic cell differentiation"/>
    <property type="evidence" value="ECO:0000250"/>
    <property type="project" value="UniProtKB"/>
</dbReference>
<dbReference type="DisProt" id="DP01023"/>
<dbReference type="FunFam" id="3.30.160.60:FF:001329">
    <property type="entry name" value="INSM transcriptional repressor 1"/>
    <property type="match status" value="1"/>
</dbReference>
<dbReference type="FunFam" id="3.30.160.60:FF:001458">
    <property type="entry name" value="INSM transcriptional repressor 1"/>
    <property type="match status" value="1"/>
</dbReference>
<dbReference type="FunFam" id="3.30.160.60:FF:002055">
    <property type="entry name" value="INSM transcriptional repressor 1"/>
    <property type="match status" value="1"/>
</dbReference>
<dbReference type="Gene3D" id="3.30.160.60">
    <property type="entry name" value="Classic Zinc Finger"/>
    <property type="match status" value="3"/>
</dbReference>
<dbReference type="IDEAL" id="IID00415"/>
<dbReference type="InterPro" id="IPR042972">
    <property type="entry name" value="INSM1/2"/>
</dbReference>
<dbReference type="InterPro" id="IPR036236">
    <property type="entry name" value="Znf_C2H2_sf"/>
</dbReference>
<dbReference type="InterPro" id="IPR013087">
    <property type="entry name" value="Znf_C2H2_type"/>
</dbReference>
<dbReference type="PANTHER" id="PTHR15065">
    <property type="entry name" value="INSULINOMA-ASSOCIATED 1"/>
    <property type="match status" value="1"/>
</dbReference>
<dbReference type="PANTHER" id="PTHR15065:SF5">
    <property type="entry name" value="INSULINOMA-ASSOCIATED PROTEIN 1"/>
    <property type="match status" value="1"/>
</dbReference>
<dbReference type="Pfam" id="PF00096">
    <property type="entry name" value="zf-C2H2"/>
    <property type="match status" value="4"/>
</dbReference>
<dbReference type="SMART" id="SM00355">
    <property type="entry name" value="ZnF_C2H2"/>
    <property type="match status" value="5"/>
</dbReference>
<dbReference type="SUPFAM" id="SSF57667">
    <property type="entry name" value="beta-beta-alpha zinc fingers"/>
    <property type="match status" value="3"/>
</dbReference>
<dbReference type="PROSITE" id="PS00028">
    <property type="entry name" value="ZINC_FINGER_C2H2_1"/>
    <property type="match status" value="4"/>
</dbReference>
<dbReference type="PROSITE" id="PS50157">
    <property type="entry name" value="ZINC_FINGER_C2H2_2"/>
    <property type="match status" value="4"/>
</dbReference>
<comment type="function">
    <text evidence="4 7 8 9 10 11">Sequence-specific DNA-binding transcriptional regulator that plays a key role in neurogenesis and neuroendocrine cell differentiation during embryonic and/or fetal development. Binds to the consensus sequence 5'-[TG][TC][TC][TT][GA]GGG[CG]A-3' in target promoters. Acts as a transcriptional repressor of NEUROD1 and INS expression via its interaction with cyclin CCND1 in a cell cycle-independent manner. Negatively regulates skeletal muscle-specific gene expression in endocrine cells of the pituitary by inhibiting the Notch signaling pathway. Represses target gene transcription by recruiting chromatin-modifying factors, such as HDAC1, HDAC2, HDAC3, KDM1A and RCOR1 histone deacetylases. Binds to its own promoter, suggesting autoregulation as a self-control feedback mechanism. Competes with histone H3 for the same binding site on the histone demethylase complex formed by KDM1A and RCOR1, and thereby inhibits demethylation of histone H3 at 'Lys-4' (PubMed:23721412). Promotes the generation and expansion of neuronal basal progenitor cells in the developing neocortex. Involved in the differentiation of endocrine cells of the developing anterior pituitary gland, of the pancreas and intestine, and of sympatho-adrenal cells in the peripheral nervous system. Promotes cell cycle signaling arrest and inhibition of cellular proliferation.</text>
</comment>
<comment type="subunit">
    <text evidence="1 8 9 10 11">Interacts (via the SNAG domain) with HDAC1 (PubMed:16569215). Interacts (via the SNAG domain) with HDAC2 (By similarity). Interacts (via the SNAG domain) with KDM1A (PubMed:23721412). Interacts (via the SNAG domain) with RCOR1. Interacts with SORBS1 (By similarity). Interacts (via the N-terminal region) with CCND1 (via cyclin N-terminal domain); the interaction competes with the binding of CCND1 to CDK4 during cell cycle progression and increases its transcriptional repressor activity (PubMed:16569215, PubMed:18417529, PubMed:19124461). Interacts with HDAC3; the interaction increases its transcriptional repressor activity (PubMed:16569215, PubMed:18417529).</text>
</comment>
<comment type="subcellular location">
    <subcellularLocation>
        <location evidence="1">Nucleus</location>
    </subcellularLocation>
</comment>
<comment type="tissue specificity">
    <text evidence="5 6">Expressed in pancreatic duct cells. Expressed in several tumor cell lines of neuroendocrine origin including pheochromocytoma, medullary thyroid carcinoma, insulinoma, medulloblastoma, retinoblastoma, pheochromacytoma, medullary thyroid carcinoma and small cell lung carcinoma.</text>
</comment>
<comment type="induction">
    <text evidence="5 7">Up-regulated by transcription factors, such as MASH1, NEUROD1, NEUROG3, NGN3 and TCF3.</text>
</comment>
<comment type="domain">
    <text>The C-terminal region is necessary for NEUROD1 promoter DNA-binding and transcriptional repressor activity.</text>
</comment>
<comment type="similarity">
    <text evidence="12">Belongs to the INSM1 family.</text>
</comment>
<reference key="1">
    <citation type="journal article" date="1992" name="J. Biol. Chem.">
        <title>A novel human insulinoma-associated cDNA, IA-1, encodes a protein with 'zinc-finger' DNA-binding motifs.</title>
        <authorList>
            <person name="Goto Y."/>
            <person name="de Silva M.G."/>
            <person name="Toscani A."/>
            <person name="Prabhakar B.S."/>
            <person name="Notkins A.L."/>
            <person name="Lan M.S."/>
        </authorList>
    </citation>
    <scope>NUCLEOTIDE SEQUENCE [MRNA]</scope>
    <scope>TISSUE SPECIFICITY</scope>
</reference>
<reference key="2">
    <citation type="journal article" date="2001" name="Nature">
        <title>The DNA sequence and comparative analysis of human chromosome 20.</title>
        <authorList>
            <person name="Deloukas P."/>
            <person name="Matthews L.H."/>
            <person name="Ashurst J.L."/>
            <person name="Burton J."/>
            <person name="Gilbert J.G.R."/>
            <person name="Jones M."/>
            <person name="Stavrides G."/>
            <person name="Almeida J.P."/>
            <person name="Babbage A.K."/>
            <person name="Bagguley C.L."/>
            <person name="Bailey J."/>
            <person name="Barlow K.F."/>
            <person name="Bates K.N."/>
            <person name="Beard L.M."/>
            <person name="Beare D.M."/>
            <person name="Beasley O.P."/>
            <person name="Bird C.P."/>
            <person name="Blakey S.E."/>
            <person name="Bridgeman A.M."/>
            <person name="Brown A.J."/>
            <person name="Buck D."/>
            <person name="Burrill W.D."/>
            <person name="Butler A.P."/>
            <person name="Carder C."/>
            <person name="Carter N.P."/>
            <person name="Chapman J.C."/>
            <person name="Clamp M."/>
            <person name="Clark G."/>
            <person name="Clark L.N."/>
            <person name="Clark S.Y."/>
            <person name="Clee C.M."/>
            <person name="Clegg S."/>
            <person name="Cobley V.E."/>
            <person name="Collier R.E."/>
            <person name="Connor R.E."/>
            <person name="Corby N.R."/>
            <person name="Coulson A."/>
            <person name="Coville G.J."/>
            <person name="Deadman R."/>
            <person name="Dhami P.D."/>
            <person name="Dunn M."/>
            <person name="Ellington A.G."/>
            <person name="Frankland J.A."/>
            <person name="Fraser A."/>
            <person name="French L."/>
            <person name="Garner P."/>
            <person name="Grafham D.V."/>
            <person name="Griffiths C."/>
            <person name="Griffiths M.N.D."/>
            <person name="Gwilliam R."/>
            <person name="Hall R.E."/>
            <person name="Hammond S."/>
            <person name="Harley J.L."/>
            <person name="Heath P.D."/>
            <person name="Ho S."/>
            <person name="Holden J.L."/>
            <person name="Howden P.J."/>
            <person name="Huckle E."/>
            <person name="Hunt A.R."/>
            <person name="Hunt S.E."/>
            <person name="Jekosch K."/>
            <person name="Johnson C.M."/>
            <person name="Johnson D."/>
            <person name="Kay M.P."/>
            <person name="Kimberley A.M."/>
            <person name="King A."/>
            <person name="Knights A."/>
            <person name="Laird G.K."/>
            <person name="Lawlor S."/>
            <person name="Lehvaeslaiho M.H."/>
            <person name="Leversha M.A."/>
            <person name="Lloyd C."/>
            <person name="Lloyd D.M."/>
            <person name="Lovell J.D."/>
            <person name="Marsh V.L."/>
            <person name="Martin S.L."/>
            <person name="McConnachie L.J."/>
            <person name="McLay K."/>
            <person name="McMurray A.A."/>
            <person name="Milne S.A."/>
            <person name="Mistry D."/>
            <person name="Moore M.J.F."/>
            <person name="Mullikin J.C."/>
            <person name="Nickerson T."/>
            <person name="Oliver K."/>
            <person name="Parker A."/>
            <person name="Patel R."/>
            <person name="Pearce T.A.V."/>
            <person name="Peck A.I."/>
            <person name="Phillimore B.J.C.T."/>
            <person name="Prathalingam S.R."/>
            <person name="Plumb R.W."/>
            <person name="Ramsay H."/>
            <person name="Rice C.M."/>
            <person name="Ross M.T."/>
            <person name="Scott C.E."/>
            <person name="Sehra H.K."/>
            <person name="Shownkeen R."/>
            <person name="Sims S."/>
            <person name="Skuce C.D."/>
            <person name="Smith M.L."/>
            <person name="Soderlund C."/>
            <person name="Steward C.A."/>
            <person name="Sulston J.E."/>
            <person name="Swann R.M."/>
            <person name="Sycamore N."/>
            <person name="Taylor R."/>
            <person name="Tee L."/>
            <person name="Thomas D.W."/>
            <person name="Thorpe A."/>
            <person name="Tracey A."/>
            <person name="Tromans A.C."/>
            <person name="Vaudin M."/>
            <person name="Wall M."/>
            <person name="Wallis J.M."/>
            <person name="Whitehead S.L."/>
            <person name="Whittaker P."/>
            <person name="Willey D.L."/>
            <person name="Williams L."/>
            <person name="Williams S.A."/>
            <person name="Wilming L."/>
            <person name="Wray P.W."/>
            <person name="Hubbard T."/>
            <person name="Durbin R.M."/>
            <person name="Bentley D.R."/>
            <person name="Beck S."/>
            <person name="Rogers J."/>
        </authorList>
    </citation>
    <scope>NUCLEOTIDE SEQUENCE [LARGE SCALE GENOMIC DNA]</scope>
</reference>
<reference key="3">
    <citation type="journal article" date="1994" name="J. Biol. Chem.">
        <title>Genomic organization, 5'-upstream sequence, and chromosomal localization of an insulinoma-associated intronless gene, IA-1.</title>
        <authorList>
            <person name="Lan M.S."/>
            <person name="Li Q."/>
            <person name="Lu J."/>
            <person name="Modi W.S."/>
            <person name="Notkins A.L."/>
        </authorList>
    </citation>
    <scope>NUCLEOTIDE SEQUENCE [GENOMIC DNA] OF 1-11</scope>
</reference>
<reference key="4">
    <citation type="journal article" date="2002" name="Nucleic Acids Res.">
        <title>Neuroendocrine differentiation factor, IA-1, is a transcriptional repressor and contains a specific DNA-binding domain: identification of consensus IA-1 binding sequence.</title>
        <authorList>
            <person name="Breslin M.B."/>
            <person name="Zhu M."/>
            <person name="Notkins A.L."/>
            <person name="Lan M.S."/>
        </authorList>
    </citation>
    <scope>FUNCTION</scope>
    <scope>DNA-BINDING</scope>
</reference>
<reference key="5">
    <citation type="journal article" date="2003" name="J. Biol. Chem.">
        <title>NeuroD1/E47 regulates the E-box element of a novel zinc finger transcription factor, IA-1, in developing nervous system.</title>
        <authorList>
            <person name="Breslin M.B."/>
            <person name="Zhu M."/>
            <person name="Lan M.S."/>
        </authorList>
    </citation>
    <scope>INDUCTION</scope>
    <scope>TISSUE SPECIFICITY</scope>
</reference>
<reference key="6">
    <citation type="journal article" date="2006" name="Biochem. J.">
        <title>INSM1 functions as a transcriptional repressor of the neuroD/beta2 gene through the recruitment of cyclin D1 and histone deacetylases.</title>
        <authorList>
            <person name="Liu W.D."/>
            <person name="Wang H.W."/>
            <person name="Muguira M."/>
            <person name="Breslin M.B."/>
            <person name="Lan M.S."/>
        </authorList>
    </citation>
    <scope>FUNCTION</scope>
    <scope>DNA-BINDING</scope>
    <scope>INTERACTION WITH CCND1; HDAC1 AND HDAC3</scope>
</reference>
<reference key="7">
    <citation type="journal article" date="2006" name="EMBO J.">
        <title>IA1 is NGN3-dependent and essential for differentiation of the endocrine pancreas.</title>
        <authorList>
            <person name="Mellitzer G."/>
            <person name="Bonne S."/>
            <person name="Luco R.F."/>
            <person name="Van De Casteele M."/>
            <person name="Lenne-Samuel N."/>
            <person name="Collombat P."/>
            <person name="Mansouri A."/>
            <person name="Lee J."/>
            <person name="Lan M."/>
            <person name="Pipeleers D."/>
            <person name="Nielsen F.C."/>
            <person name="Ferrer J."/>
            <person name="Gradwohl G."/>
            <person name="Heimberg H."/>
        </authorList>
    </citation>
    <scope>FUNCTION</scope>
    <scope>INDUCTION</scope>
</reference>
<reference key="8">
    <citation type="journal article" date="2008" name="J. Endocrinol.">
        <title>Identification of an INSM1-binding site in the insulin promoter: negative regulation of the insulin gene transcription.</title>
        <authorList>
            <person name="Wang H.W."/>
            <person name="Muguira M."/>
            <person name="Liu W.D."/>
            <person name="Zhang T."/>
            <person name="Chen C."/>
            <person name="Aucoin R."/>
            <person name="Breslin M.B."/>
            <person name="Lan M.S."/>
        </authorList>
    </citation>
    <scope>FUNCTION</scope>
    <scope>DNA-BINDING</scope>
    <scope>INTERACTION WITH CCND1 AND HDAC3</scope>
</reference>
<reference key="9">
    <citation type="journal article" date="2009" name="J. Biol. Chem.">
        <title>Zinc finger transcription factor INSM1 interrupts cyclin D1 and CDK4 binding and induces cell cycle arrest.</title>
        <authorList>
            <person name="Zhang T."/>
            <person name="Liu W.D."/>
            <person name="Saunee N.A."/>
            <person name="Breslin M.B."/>
            <person name="Lan M.S."/>
        </authorList>
    </citation>
    <scope>FUNCTION</scope>
    <scope>DNA-BINDING</scope>
    <scope>INTERACTION WITH CCND1</scope>
    <scope>MUTAGENESIS OF 43-PRO--PRO-58</scope>
</reference>
<reference key="10">
    <citation type="journal article" date="2009" name="FASEB J.">
        <title>Structure, expression, and biological function of INSM1 transcription factor in neuroendocrine differentiation.</title>
        <authorList>
            <person name="Lan M.S."/>
            <person name="Breslin M.B."/>
        </authorList>
    </citation>
    <scope>REVIEW</scope>
</reference>
<reference key="11">
    <citation type="submission" date="2012-10" db="PDB data bank">
        <title>Solution NMR structure of C2H2-type zinc-fingers 4 and 5 from human insulinoma-associated protein 1 (fragment 424-497), Northeast structural genomics consortium target HR7614B (Casp target).</title>
        <authorList>
            <consortium name="Northeast structural genomics consortium (NESG)"/>
        </authorList>
    </citation>
    <scope>STRUCTURE BY NMR OF 424-497 IN COMPLEX WITH ZINC IONS</scope>
</reference>
<reference evidence="13" key="12">
    <citation type="journal article" date="2013" name="ACS Chem. Biol.">
        <title>Protein recognition by short peptide reversible inhibitors of the chromatin-modifying LSD1/CoREST lysine demethylase.</title>
        <authorList>
            <person name="Tortorici M."/>
            <person name="Borrello M.T."/>
            <person name="Tardugno M."/>
            <person name="Chiarelli L.R."/>
            <person name="Pilotto S."/>
            <person name="Ciossani G."/>
            <person name="Vellore N.A."/>
            <person name="Bailey S.G."/>
            <person name="Cowan J."/>
            <person name="O'Connell M."/>
            <person name="Crabb S.J."/>
            <person name="Packham G."/>
            <person name="Mai A."/>
            <person name="Baron R."/>
            <person name="Ganesan A."/>
            <person name="Mattevi A."/>
        </authorList>
    </citation>
    <scope>X-RAY CRYSTALLOGRAPHY (2.96 ANGSTROMS) OF 2-9 IN COMPLEX WITH KDM1A</scope>
    <scope>FUNCTION</scope>
    <scope>INTERACTION WITH KDM1A</scope>
</reference>
<evidence type="ECO:0000250" key="1">
    <source>
        <dbReference type="UniProtKB" id="Q63ZV0"/>
    </source>
</evidence>
<evidence type="ECO:0000255" key="2">
    <source>
        <dbReference type="PROSITE-ProRule" id="PRU00042"/>
    </source>
</evidence>
<evidence type="ECO:0000256" key="3">
    <source>
        <dbReference type="SAM" id="MobiDB-lite"/>
    </source>
</evidence>
<evidence type="ECO:0000269" key="4">
    <source>
    </source>
</evidence>
<evidence type="ECO:0000269" key="5">
    <source>
    </source>
</evidence>
<evidence type="ECO:0000269" key="6">
    <source>
    </source>
</evidence>
<evidence type="ECO:0000269" key="7">
    <source>
    </source>
</evidence>
<evidence type="ECO:0000269" key="8">
    <source>
    </source>
</evidence>
<evidence type="ECO:0000269" key="9">
    <source>
    </source>
</evidence>
<evidence type="ECO:0000269" key="10">
    <source>
    </source>
</evidence>
<evidence type="ECO:0000269" key="11">
    <source>
    </source>
</evidence>
<evidence type="ECO:0000305" key="12"/>
<evidence type="ECO:0007744" key="13">
    <source>
        <dbReference type="PDB" id="3ZMS"/>
    </source>
</evidence>
<evidence type="ECO:0007829" key="14">
    <source>
        <dbReference type="PDB" id="2LV2"/>
    </source>
</evidence>
<evidence type="ECO:0007829" key="15">
    <source>
        <dbReference type="PDB" id="3ZMS"/>
    </source>
</evidence>
<organism>
    <name type="scientific">Homo sapiens</name>
    <name type="common">Human</name>
    <dbReference type="NCBI Taxonomy" id="9606"/>
    <lineage>
        <taxon>Eukaryota</taxon>
        <taxon>Metazoa</taxon>
        <taxon>Chordata</taxon>
        <taxon>Craniata</taxon>
        <taxon>Vertebrata</taxon>
        <taxon>Euteleostomi</taxon>
        <taxon>Mammalia</taxon>
        <taxon>Eutheria</taxon>
        <taxon>Euarchontoglires</taxon>
        <taxon>Primates</taxon>
        <taxon>Haplorrhini</taxon>
        <taxon>Catarrhini</taxon>
        <taxon>Hominidae</taxon>
        <taxon>Homo</taxon>
    </lineage>
</organism>